<keyword id="KW-0878">Amphibian defense peptide</keyword>
<keyword id="KW-0044">Antibiotic</keyword>
<keyword id="KW-0929">Antimicrobial</keyword>
<keyword id="KW-0903">Direct protein sequencing</keyword>
<keyword id="KW-1015">Disulfide bond</keyword>
<keyword id="KW-0295">Fungicide</keyword>
<keyword id="KW-0964">Secreted</keyword>
<proteinExistence type="evidence at protein level"/>
<protein>
    <recommendedName>
        <fullName>Brevinin-1Bb</fullName>
    </recommendedName>
</protein>
<organism>
    <name type="scientific">Lithobates berlandieri</name>
    <name type="common">Rio Grande leopard frog</name>
    <name type="synonym">Rana berlandieri</name>
    <dbReference type="NCBI Taxonomy" id="30360"/>
    <lineage>
        <taxon>Eukaryota</taxon>
        <taxon>Metazoa</taxon>
        <taxon>Chordata</taxon>
        <taxon>Craniata</taxon>
        <taxon>Vertebrata</taxon>
        <taxon>Euteleostomi</taxon>
        <taxon>Amphibia</taxon>
        <taxon>Batrachia</taxon>
        <taxon>Anura</taxon>
        <taxon>Neobatrachia</taxon>
        <taxon>Ranoidea</taxon>
        <taxon>Ranidae</taxon>
        <taxon>Lithobates</taxon>
    </lineage>
</organism>
<accession>P82834</accession>
<reference key="1">
    <citation type="journal article" date="2000" name="Eur. J. Biochem.">
        <title>Peptides with antimicrobial activity from four different families isolated from the skins of the North American frogs Rana luteiventris, Rana berlandieri and Rana pipiens.</title>
        <authorList>
            <person name="Goraya J."/>
            <person name="Wang Y."/>
            <person name="Li Z."/>
            <person name="O'Flaherty M."/>
            <person name="Knoop F.C."/>
            <person name="Platz J.E."/>
            <person name="Conlon J.M."/>
        </authorList>
    </citation>
    <scope>PROTEIN SEQUENCE</scope>
    <scope>FUNCTION</scope>
    <scope>MASS SPECTROMETRY</scope>
    <source>
        <tissue>Skin secretion</tissue>
    </source>
</reference>
<name>BR1B_LITBE</name>
<comment type="function">
    <text evidence="2">Antibacterial activity against Gram-positive bacterium S.aureus and Gram-negative bacterium E.coli. Has activity against C.albicans.</text>
</comment>
<comment type="subcellular location">
    <subcellularLocation>
        <location>Secreted</location>
    </subcellularLocation>
</comment>
<comment type="tissue specificity">
    <text>Expressed by the skin glands.</text>
</comment>
<comment type="mass spectrometry" mass="2567.3" method="Electrospray" evidence="2"/>
<comment type="similarity">
    <text evidence="3">Belongs to the frog skin active peptide (FSAP) family. Brevinin subfamily.</text>
</comment>
<evidence type="ECO:0000250" key="1"/>
<evidence type="ECO:0000269" key="2">
    <source>
    </source>
</evidence>
<evidence type="ECO:0000305" key="3"/>
<dbReference type="GO" id="GO:0005576">
    <property type="term" value="C:extracellular region"/>
    <property type="evidence" value="ECO:0007669"/>
    <property type="project" value="UniProtKB-SubCell"/>
</dbReference>
<dbReference type="GO" id="GO:0042742">
    <property type="term" value="P:defense response to bacterium"/>
    <property type="evidence" value="ECO:0007669"/>
    <property type="project" value="UniProtKB-KW"/>
</dbReference>
<dbReference type="GO" id="GO:0050832">
    <property type="term" value="P:defense response to fungus"/>
    <property type="evidence" value="ECO:0007669"/>
    <property type="project" value="UniProtKB-KW"/>
</dbReference>
<dbReference type="GO" id="GO:0031640">
    <property type="term" value="P:killing of cells of another organism"/>
    <property type="evidence" value="ECO:0007669"/>
    <property type="project" value="UniProtKB-KW"/>
</dbReference>
<dbReference type="InterPro" id="IPR012520">
    <property type="entry name" value="Antimicrobial_frog_1"/>
</dbReference>
<dbReference type="Pfam" id="PF08018">
    <property type="entry name" value="Antimicrobial_1"/>
    <property type="match status" value="1"/>
</dbReference>
<feature type="peptide" id="PRO_0000043527" description="Brevinin-1Bb">
    <location>
        <begin position="1"/>
        <end position="24"/>
    </location>
</feature>
<feature type="disulfide bond" evidence="1">
    <location>
        <begin position="18"/>
        <end position="24"/>
    </location>
</feature>
<sequence length="24" mass="2569">FLPAIAGMAAKFLPKIFCAISKKC</sequence>